<sequence length="154" mass="17309">MGLSEAEWQLVLHVWAKVEADLSGHGQEILIRLFKGHPETLEKFDKFKHLKSEAEMKASEDLKKHGHTVLTALGGILKKKGHHEAELKPLAQSHATKHKIPIKYLEFISDAIIHVLHSRHPSDFGADAQAAMTKALELFRKDIAAKYKELGFHG</sequence>
<accession>P02182</accession>
<name>MYG_ZIPCA</name>
<reference key="1">
    <citation type="journal article" date="1980" name="Biochim. Biophys. Acta">
        <title>Complete amino acid sequence of the major component myoglobin from the goose-beaked whale, Ziphius cavirostris.</title>
        <authorList>
            <person name="Lehman L.D."/>
            <person name="Jones B.N."/>
            <person name="Dwulet F.E."/>
            <person name="Bogardt R.A. Jr."/>
            <person name="Gurd F.R.N."/>
        </authorList>
    </citation>
    <scope>PROTEIN SEQUENCE OF 2-154</scope>
</reference>
<proteinExistence type="evidence at protein level"/>
<organism>
    <name type="scientific">Ziphius cavirostris</name>
    <name type="common">Cuvier's beaked whale</name>
    <name type="synonym">Goose-beaked whale</name>
    <dbReference type="NCBI Taxonomy" id="9760"/>
    <lineage>
        <taxon>Eukaryota</taxon>
        <taxon>Metazoa</taxon>
        <taxon>Chordata</taxon>
        <taxon>Craniata</taxon>
        <taxon>Vertebrata</taxon>
        <taxon>Euteleostomi</taxon>
        <taxon>Mammalia</taxon>
        <taxon>Eutheria</taxon>
        <taxon>Laurasiatheria</taxon>
        <taxon>Artiodactyla</taxon>
        <taxon>Whippomorpha</taxon>
        <taxon>Cetacea</taxon>
        <taxon>Odontoceti</taxon>
        <taxon>Ziphiidae</taxon>
        <taxon>Ziphius</taxon>
    </lineage>
</organism>
<protein>
    <recommendedName>
        <fullName>Myoglobin</fullName>
    </recommendedName>
    <alternativeName>
        <fullName evidence="1">Nitrite reductase MB</fullName>
        <ecNumber evidence="1">1.7.-.-</ecNumber>
    </alternativeName>
    <alternativeName>
        <fullName evidence="1">Pseudoperoxidase MB</fullName>
        <ecNumber evidence="1">1.11.1.-</ecNumber>
    </alternativeName>
</protein>
<dbReference type="EC" id="1.7.-.-" evidence="1"/>
<dbReference type="EC" id="1.11.1.-" evidence="1"/>
<dbReference type="PIR" id="A02504">
    <property type="entry name" value="MYWHZ"/>
</dbReference>
<dbReference type="SMR" id="P02182"/>
<dbReference type="GO" id="GO:0070062">
    <property type="term" value="C:extracellular exosome"/>
    <property type="evidence" value="ECO:0007669"/>
    <property type="project" value="TreeGrafter"/>
</dbReference>
<dbReference type="GO" id="GO:0016528">
    <property type="term" value="C:sarcoplasm"/>
    <property type="evidence" value="ECO:0000250"/>
    <property type="project" value="UniProtKB"/>
</dbReference>
<dbReference type="GO" id="GO:0020037">
    <property type="term" value="F:heme binding"/>
    <property type="evidence" value="ECO:0007669"/>
    <property type="project" value="InterPro"/>
</dbReference>
<dbReference type="GO" id="GO:0046872">
    <property type="term" value="F:metal ion binding"/>
    <property type="evidence" value="ECO:0007669"/>
    <property type="project" value="UniProtKB-KW"/>
</dbReference>
<dbReference type="GO" id="GO:0098809">
    <property type="term" value="F:nitrite reductase activity"/>
    <property type="evidence" value="ECO:0000250"/>
    <property type="project" value="UniProtKB"/>
</dbReference>
<dbReference type="GO" id="GO:0019825">
    <property type="term" value="F:oxygen binding"/>
    <property type="evidence" value="ECO:0007669"/>
    <property type="project" value="InterPro"/>
</dbReference>
<dbReference type="GO" id="GO:0005344">
    <property type="term" value="F:oxygen carrier activity"/>
    <property type="evidence" value="ECO:0000250"/>
    <property type="project" value="UniProtKB"/>
</dbReference>
<dbReference type="GO" id="GO:0004601">
    <property type="term" value="F:peroxidase activity"/>
    <property type="evidence" value="ECO:0000250"/>
    <property type="project" value="UniProtKB"/>
</dbReference>
<dbReference type="GO" id="GO:0019430">
    <property type="term" value="P:removal of superoxide radicals"/>
    <property type="evidence" value="ECO:0000250"/>
    <property type="project" value="UniProtKB"/>
</dbReference>
<dbReference type="Gene3D" id="6.10.140.2100">
    <property type="match status" value="1"/>
</dbReference>
<dbReference type="Gene3D" id="6.10.140.2110">
    <property type="match status" value="1"/>
</dbReference>
<dbReference type="InterPro" id="IPR000971">
    <property type="entry name" value="Globin"/>
</dbReference>
<dbReference type="InterPro" id="IPR009050">
    <property type="entry name" value="Globin-like_sf"/>
</dbReference>
<dbReference type="InterPro" id="IPR002335">
    <property type="entry name" value="Myoglobin"/>
</dbReference>
<dbReference type="PANTHER" id="PTHR47132">
    <property type="entry name" value="MYOGLOBIN"/>
    <property type="match status" value="1"/>
</dbReference>
<dbReference type="PANTHER" id="PTHR47132:SF1">
    <property type="entry name" value="MYOGLOBIN"/>
    <property type="match status" value="1"/>
</dbReference>
<dbReference type="Pfam" id="PF00042">
    <property type="entry name" value="Globin"/>
    <property type="match status" value="1"/>
</dbReference>
<dbReference type="PRINTS" id="PR00613">
    <property type="entry name" value="MYOGLOBIN"/>
</dbReference>
<dbReference type="SUPFAM" id="SSF46458">
    <property type="entry name" value="Globin-like"/>
    <property type="match status" value="1"/>
</dbReference>
<dbReference type="PROSITE" id="PS01033">
    <property type="entry name" value="GLOBIN"/>
    <property type="match status" value="1"/>
</dbReference>
<keyword id="KW-0963">Cytoplasm</keyword>
<keyword id="KW-0903">Direct protein sequencing</keyword>
<keyword id="KW-0349">Heme</keyword>
<keyword id="KW-0408">Iron</keyword>
<keyword id="KW-0479">Metal-binding</keyword>
<keyword id="KW-0514">Muscle protein</keyword>
<keyword id="KW-0560">Oxidoreductase</keyword>
<keyword id="KW-0561">Oxygen transport</keyword>
<keyword id="KW-0597">Phosphoprotein</keyword>
<keyword id="KW-0813">Transport</keyword>
<comment type="function">
    <text evidence="1">Monomeric heme protein which primary function is to store oxygen and facilitate its diffusion within muscle tissues. Reversibly binds oxygen through a pentacoordinated heme iron and enables its timely and efficient release as needed during periods of heightened demand. Depending on the oxidative conditions of tissues and cells, and in addition to its ability to bind oxygen, it also has a nitrite reductase activity whereby it regulates the production of bioactive nitric oxide. Under stress conditions, like hypoxia and anoxia, it also protects cells against reactive oxygen species thanks to its pseudoperoxidase activity.</text>
</comment>
<comment type="catalytic activity">
    <reaction evidence="1">
        <text>Fe(III)-heme b-[protein] + nitric oxide + H2O = Fe(II)-heme b-[protein] + nitrite + 2 H(+)</text>
        <dbReference type="Rhea" id="RHEA:77711"/>
        <dbReference type="Rhea" id="RHEA-COMP:18975"/>
        <dbReference type="Rhea" id="RHEA-COMP:18976"/>
        <dbReference type="ChEBI" id="CHEBI:15377"/>
        <dbReference type="ChEBI" id="CHEBI:15378"/>
        <dbReference type="ChEBI" id="CHEBI:16301"/>
        <dbReference type="ChEBI" id="CHEBI:16480"/>
        <dbReference type="ChEBI" id="CHEBI:55376"/>
        <dbReference type="ChEBI" id="CHEBI:60344"/>
    </reaction>
    <physiologicalReaction direction="right-to-left" evidence="1">
        <dbReference type="Rhea" id="RHEA:77713"/>
    </physiologicalReaction>
</comment>
<comment type="catalytic activity">
    <reaction evidence="1">
        <text>H2O2 + AH2 = A + 2 H2O</text>
        <dbReference type="Rhea" id="RHEA:30275"/>
        <dbReference type="ChEBI" id="CHEBI:13193"/>
        <dbReference type="ChEBI" id="CHEBI:15377"/>
        <dbReference type="ChEBI" id="CHEBI:16240"/>
        <dbReference type="ChEBI" id="CHEBI:17499"/>
    </reaction>
</comment>
<comment type="subunit">
    <text evidence="2">Monomeric.</text>
</comment>
<comment type="subcellular location">
    <subcellularLocation>
        <location evidence="1">Cytoplasm</location>
        <location evidence="1">Sarcoplasm</location>
    </subcellularLocation>
</comment>
<comment type="similarity">
    <text evidence="7">Belongs to the globin family.</text>
</comment>
<gene>
    <name type="primary">MB</name>
</gene>
<feature type="initiator methionine" description="Removed" evidence="8">
    <location>
        <position position="1"/>
    </location>
</feature>
<feature type="chain" id="PRO_0000053351" description="Myoglobin">
    <location>
        <begin position="2"/>
        <end position="154"/>
    </location>
</feature>
<feature type="domain" description="Globin" evidence="7">
    <location>
        <begin position="2"/>
        <end position="148"/>
    </location>
</feature>
<feature type="binding site" evidence="5">
    <location>
        <position position="65"/>
    </location>
    <ligand>
        <name>nitrite</name>
        <dbReference type="ChEBI" id="CHEBI:16301"/>
    </ligand>
</feature>
<feature type="binding site" evidence="3 7">
    <location>
        <position position="65"/>
    </location>
    <ligand>
        <name>O2</name>
        <dbReference type="ChEBI" id="CHEBI:15379"/>
    </ligand>
</feature>
<feature type="binding site" description="proximal binding residue" evidence="1">
    <location>
        <position position="94"/>
    </location>
    <ligand>
        <name>heme b</name>
        <dbReference type="ChEBI" id="CHEBI:60344"/>
    </ligand>
    <ligandPart>
        <name>Fe</name>
        <dbReference type="ChEBI" id="CHEBI:18248"/>
    </ligandPart>
</feature>
<feature type="modified residue" description="Phosphoserine" evidence="6">
    <location>
        <position position="4"/>
    </location>
</feature>
<feature type="modified residue" description="Phosphothreonine" evidence="4">
    <location>
        <position position="68"/>
    </location>
</feature>
<evidence type="ECO:0000250" key="1">
    <source>
        <dbReference type="UniProtKB" id="P02144"/>
    </source>
</evidence>
<evidence type="ECO:0000250" key="2">
    <source>
        <dbReference type="UniProtKB" id="P02185"/>
    </source>
</evidence>
<evidence type="ECO:0000250" key="3">
    <source>
        <dbReference type="UniProtKB" id="P02189"/>
    </source>
</evidence>
<evidence type="ECO:0000250" key="4">
    <source>
        <dbReference type="UniProtKB" id="P04247"/>
    </source>
</evidence>
<evidence type="ECO:0000250" key="5">
    <source>
        <dbReference type="UniProtKB" id="P68082"/>
    </source>
</evidence>
<evidence type="ECO:0000250" key="6">
    <source>
        <dbReference type="UniProtKB" id="Q9QZ76"/>
    </source>
</evidence>
<evidence type="ECO:0000255" key="7">
    <source>
        <dbReference type="PROSITE-ProRule" id="PRU00238"/>
    </source>
</evidence>
<evidence type="ECO:0000269" key="8">
    <source>
    </source>
</evidence>